<reference evidence="3" key="1">
    <citation type="journal article" date="2010" name="Food Res. Intern.">
        <title>Production of three anti-listerial peptides by Lactobacillus curvatus in MRS broth.</title>
        <authorList>
            <person name="Ghalfi H."/>
            <person name="Benkerroum N."/>
            <person name="Ongena M."/>
            <person name="Bensaid M."/>
            <person name="Thonart P."/>
        </authorList>
    </citation>
    <scope>PROTEIN SEQUENCE</scope>
    <scope>FUNCTION</scope>
    <scope>SUBCELLULAR LOCATION</scope>
    <source>
        <strain evidence="1">CWBI-B28</strain>
    </source>
</reference>
<name>BAP2_LATCU</name>
<evidence type="ECO:0000269" key="1">
    <source ref="1"/>
</evidence>
<evidence type="ECO:0000303" key="2">
    <source ref="1"/>
</evidence>
<evidence type="ECO:0000305" key="3"/>
<sequence>VAPFPEQFLX</sequence>
<comment type="function">
    <text evidence="1">Has antibacterial activity against the Gram-positive bacteria L.monocytogenes, L.lactis subsp lactis and L.curvatus H28, but not against the Gram-positive bacteria L.curvatus CWBI-B28, L.brevis and L.plantarum or the Gram-negative bacteria E.coli and Pseudomonas sp 55. Has no antifungal activity against S.cerevisiae, Penicillium sp BKS-TAN2 or A.niger.</text>
</comment>
<comment type="subcellular location">
    <subcellularLocation>
        <location evidence="1">Secreted</location>
    </subcellularLocation>
</comment>
<proteinExistence type="evidence at protein level"/>
<dbReference type="GO" id="GO:0005576">
    <property type="term" value="C:extracellular region"/>
    <property type="evidence" value="ECO:0007669"/>
    <property type="project" value="UniProtKB-SubCell"/>
</dbReference>
<dbReference type="GO" id="GO:0042742">
    <property type="term" value="P:defense response to bacterium"/>
    <property type="evidence" value="ECO:0007669"/>
    <property type="project" value="UniProtKB-KW"/>
</dbReference>
<dbReference type="GO" id="GO:0031640">
    <property type="term" value="P:killing of cells of another organism"/>
    <property type="evidence" value="ECO:0007669"/>
    <property type="project" value="UniProtKB-KW"/>
</dbReference>
<protein>
    <recommendedName>
        <fullName evidence="2">Bioactive peptide 2</fullName>
        <shortName evidence="2">BAP2</shortName>
    </recommendedName>
</protein>
<keyword id="KW-0044">Antibiotic</keyword>
<keyword id="KW-0929">Antimicrobial</keyword>
<keyword id="KW-0078">Bacteriocin</keyword>
<keyword id="KW-0903">Direct protein sequencing</keyword>
<keyword id="KW-0964">Secreted</keyword>
<accession>P84710</accession>
<feature type="peptide" id="PRO_0000223896" description="Bioactive peptide 2" evidence="1">
    <location>
        <begin position="1"/>
        <end position="10" status="greater than"/>
    </location>
</feature>
<feature type="non-terminal residue" evidence="2">
    <location>
        <position position="10"/>
    </location>
</feature>
<organism>
    <name type="scientific">Latilactobacillus curvatus</name>
    <name type="common">Lactobacillus curvatus</name>
    <dbReference type="NCBI Taxonomy" id="28038"/>
    <lineage>
        <taxon>Bacteria</taxon>
        <taxon>Bacillati</taxon>
        <taxon>Bacillota</taxon>
        <taxon>Bacilli</taxon>
        <taxon>Lactobacillales</taxon>
        <taxon>Lactobacillaceae</taxon>
        <taxon>Latilactobacillus</taxon>
    </lineage>
</organism>